<protein>
    <recommendedName>
        <fullName>Peroxidase C1C</fullName>
        <ecNumber>1.11.1.7</ecNumber>
    </recommendedName>
</protein>
<feature type="signal peptide">
    <location>
        <begin position="1" status="less than"/>
        <end position="9"/>
    </location>
</feature>
<feature type="chain" id="PRO_0000023742" description="Peroxidase C1C">
    <location>
        <begin position="10"/>
        <end position="332"/>
    </location>
</feature>
<feature type="active site" description="Proton acceptor" evidence="3 4">
    <location>
        <position position="51"/>
    </location>
</feature>
<feature type="binding site" evidence="3">
    <location>
        <position position="52"/>
    </location>
    <ligand>
        <name>Ca(2+)</name>
        <dbReference type="ChEBI" id="CHEBI:29108"/>
        <label>1</label>
    </ligand>
</feature>
<feature type="binding site" evidence="3">
    <location>
        <position position="55"/>
    </location>
    <ligand>
        <name>Ca(2+)</name>
        <dbReference type="ChEBI" id="CHEBI:29108"/>
        <label>1</label>
    </ligand>
</feature>
<feature type="binding site" evidence="3">
    <location>
        <position position="57"/>
    </location>
    <ligand>
        <name>Ca(2+)</name>
        <dbReference type="ChEBI" id="CHEBI:29108"/>
        <label>1</label>
    </ligand>
</feature>
<feature type="binding site" evidence="3">
    <location>
        <position position="59"/>
    </location>
    <ligand>
        <name>Ca(2+)</name>
        <dbReference type="ChEBI" id="CHEBI:29108"/>
        <label>1</label>
    </ligand>
</feature>
<feature type="binding site" evidence="3">
    <location>
        <position position="61"/>
    </location>
    <ligand>
        <name>Ca(2+)</name>
        <dbReference type="ChEBI" id="CHEBI:29108"/>
        <label>1</label>
    </ligand>
</feature>
<feature type="binding site" evidence="3">
    <location>
        <position position="148"/>
    </location>
    <ligand>
        <name>substrate</name>
    </ligand>
</feature>
<feature type="binding site" description="axial binding residue" evidence="3">
    <location>
        <position position="179"/>
    </location>
    <ligand>
        <name>heme b</name>
        <dbReference type="ChEBI" id="CHEBI:60344"/>
    </ligand>
    <ligandPart>
        <name>Fe</name>
        <dbReference type="ChEBI" id="CHEBI:18248"/>
    </ligandPart>
</feature>
<feature type="binding site" evidence="3">
    <location>
        <position position="180"/>
    </location>
    <ligand>
        <name>Ca(2+)</name>
        <dbReference type="ChEBI" id="CHEBI:29108"/>
        <label>2</label>
    </ligand>
</feature>
<feature type="binding site" evidence="3">
    <location>
        <position position="231"/>
    </location>
    <ligand>
        <name>Ca(2+)</name>
        <dbReference type="ChEBI" id="CHEBI:29108"/>
        <label>2</label>
    </ligand>
</feature>
<feature type="binding site" evidence="3">
    <location>
        <position position="234"/>
    </location>
    <ligand>
        <name>Ca(2+)</name>
        <dbReference type="ChEBI" id="CHEBI:29108"/>
        <label>2</label>
    </ligand>
</feature>
<feature type="binding site" evidence="3">
    <location>
        <position position="239"/>
    </location>
    <ligand>
        <name>Ca(2+)</name>
        <dbReference type="ChEBI" id="CHEBI:29108"/>
        <label>2</label>
    </ligand>
</feature>
<feature type="site" description="Transition state stabilizer" evidence="3">
    <location>
        <position position="47"/>
    </location>
</feature>
<feature type="modified residue" description="Pyrrolidone carboxylic acid" evidence="1 3">
    <location>
        <position position="10"/>
    </location>
</feature>
<feature type="glycosylation site" description="N-linked (GlcNAc...) asparagine" evidence="2">
    <location>
        <position position="22"/>
    </location>
</feature>
<feature type="glycosylation site" description="N-linked (GlcNAc...) asparagine" evidence="2">
    <location>
        <position position="66"/>
    </location>
</feature>
<feature type="glycosylation site" description="N-linked (GlcNAc...) asparagine" evidence="2">
    <location>
        <position position="195"/>
    </location>
</feature>
<feature type="glycosylation site" description="N-linked (GlcNAc...) asparagine" evidence="2">
    <location>
        <position position="207"/>
    </location>
</feature>
<feature type="glycosylation site" description="N-linked (GlcNAc...) asparagine" evidence="2">
    <location>
        <position position="223"/>
    </location>
</feature>
<feature type="glycosylation site" description="N-linked (GlcNAc...) asparagine" evidence="2">
    <location>
        <position position="264"/>
    </location>
</feature>
<feature type="disulfide bond" evidence="3">
    <location>
        <begin position="20"/>
        <end position="100"/>
    </location>
</feature>
<feature type="disulfide bond" evidence="3">
    <location>
        <begin position="53"/>
        <end position="58"/>
    </location>
</feature>
<feature type="disulfide bond" evidence="3">
    <location>
        <begin position="106"/>
        <end position="310"/>
    </location>
</feature>
<feature type="disulfide bond" evidence="3">
    <location>
        <begin position="186"/>
        <end position="218"/>
    </location>
</feature>
<feature type="non-terminal residue">
    <location>
        <position position="1"/>
    </location>
</feature>
<name>PER1C_ARMRU</name>
<reference key="1">
    <citation type="journal article" date="1988" name="Eur. J. Biochem.">
        <title>Structure of the horseradish peroxidase isozyme C genes.</title>
        <authorList>
            <person name="Fujiyama K."/>
            <person name="Takemura H."/>
            <person name="Shibayama S."/>
            <person name="Kobayashi K."/>
            <person name="Choi J.K."/>
            <person name="Shinmyo A."/>
            <person name="Takano M."/>
            <person name="Yamada Y."/>
            <person name="Okada H."/>
        </authorList>
    </citation>
    <scope>NUCLEOTIDE SEQUENCE [GENOMIC DNA]</scope>
</reference>
<sequence>MLHASFSNAQLTPTFYDNSCPNVSNIVRDIIINELRSDPSIAASILRLHFHDCFVNGCDASILLDNTTSFRTEKDAFGNANSARGFPVVDRIKAAVERACPRTVSCADVLTIAAQQSVNLAGGPSWRVPLGRRDSRQAFLDLANANLPAPSFTLPELKAAFANVGLNRPSDLVALSGGHTFGKNQCRFIMDRLYNFSNTGLPDPTLNTTYLQTLRQQCPRNGNQSVLVDFDLRTPTVFDNKYYVNLKEQKGLIQSDQELFSSPNATDTIPLVRSYADGTQTFFNAFVEAMNRMGNITPLTGTQGEIRLNCRVVNSNSLLHDIVEVVDFVSSM</sequence>
<keyword id="KW-0106">Calcium</keyword>
<keyword id="KW-1015">Disulfide bond</keyword>
<keyword id="KW-0325">Glycoprotein</keyword>
<keyword id="KW-0349">Heme</keyword>
<keyword id="KW-0376">Hydrogen peroxide</keyword>
<keyword id="KW-0408">Iron</keyword>
<keyword id="KW-0479">Metal-binding</keyword>
<keyword id="KW-0560">Oxidoreductase</keyword>
<keyword id="KW-0575">Peroxidase</keyword>
<keyword id="KW-0873">Pyrrolidone carboxylic acid</keyword>
<keyword id="KW-0964">Secreted</keyword>
<keyword id="KW-0732">Signal</keyword>
<keyword id="KW-0926">Vacuole</keyword>
<proteinExistence type="inferred from homology"/>
<gene>
    <name type="primary">PRXC1C</name>
    <name type="synonym">HRPC3</name>
</gene>
<comment type="function">
    <text>Removal of H(2)O(2), oxidation of toxic reductants, biosynthesis and degradation of lignin, suberization, auxin catabolism, response to environmental stresses such as wounding, pathogen attack and oxidative stress. These functions might be dependent on each isozyme/isoform in each plant tissue.</text>
</comment>
<comment type="catalytic activity">
    <reaction>
        <text>2 a phenolic donor + H2O2 = 2 a phenolic radical donor + 2 H2O</text>
        <dbReference type="Rhea" id="RHEA:56136"/>
        <dbReference type="ChEBI" id="CHEBI:15377"/>
        <dbReference type="ChEBI" id="CHEBI:16240"/>
        <dbReference type="ChEBI" id="CHEBI:139520"/>
        <dbReference type="ChEBI" id="CHEBI:139521"/>
        <dbReference type="EC" id="1.11.1.7"/>
    </reaction>
</comment>
<comment type="cofactor">
    <cofactor>
        <name>Ca(2+)</name>
        <dbReference type="ChEBI" id="CHEBI:29108"/>
    </cofactor>
    <text>Binds 2 calcium ions per subunit.</text>
</comment>
<comment type="cofactor">
    <cofactor>
        <name>heme b</name>
        <dbReference type="ChEBI" id="CHEBI:60344"/>
    </cofactor>
    <text>Binds 1 heme b (iron(II)-protoporphyrin IX) group per subunit.</text>
</comment>
<comment type="subcellular location">
    <subcellularLocation>
        <location evidence="5">Secreted</location>
    </subcellularLocation>
    <subcellularLocation>
        <location evidence="5">Vacuole</location>
    </subcellularLocation>
    <text>Carboxy-terminal extension appears to target the protein to vacuoles.</text>
</comment>
<comment type="similarity">
    <text evidence="3">Belongs to the peroxidase family. Classical plant (class III) peroxidase subfamily.</text>
</comment>
<accession>P15233</accession>
<organism>
    <name type="scientific">Armoracia rusticana</name>
    <name type="common">Horseradish</name>
    <name type="synonym">Armoracia laphatifolia</name>
    <dbReference type="NCBI Taxonomy" id="3704"/>
    <lineage>
        <taxon>Eukaryota</taxon>
        <taxon>Viridiplantae</taxon>
        <taxon>Streptophyta</taxon>
        <taxon>Embryophyta</taxon>
        <taxon>Tracheophyta</taxon>
        <taxon>Spermatophyta</taxon>
        <taxon>Magnoliopsida</taxon>
        <taxon>eudicotyledons</taxon>
        <taxon>Gunneridae</taxon>
        <taxon>Pentapetalae</taxon>
        <taxon>rosids</taxon>
        <taxon>malvids</taxon>
        <taxon>Brassicales</taxon>
        <taxon>Brassicaceae</taxon>
        <taxon>Cardamineae</taxon>
        <taxon>Armoracia</taxon>
    </lineage>
</organism>
<evidence type="ECO:0000250" key="1">
    <source>
        <dbReference type="UniProtKB" id="Q42578"/>
    </source>
</evidence>
<evidence type="ECO:0000255" key="2"/>
<evidence type="ECO:0000255" key="3">
    <source>
        <dbReference type="PROSITE-ProRule" id="PRU00297"/>
    </source>
</evidence>
<evidence type="ECO:0000255" key="4">
    <source>
        <dbReference type="PROSITE-ProRule" id="PRU10012"/>
    </source>
</evidence>
<evidence type="ECO:0000305" key="5"/>
<dbReference type="EC" id="1.11.1.7"/>
<dbReference type="EMBL" id="M60729">
    <property type="protein sequence ID" value="AAA33379.1"/>
    <property type="molecule type" value="Genomic_DNA"/>
</dbReference>
<dbReference type="PIR" id="S00627">
    <property type="entry name" value="S00627"/>
</dbReference>
<dbReference type="SMR" id="P15233"/>
<dbReference type="PeroxiBase" id="88">
    <property type="entry name" value="AruPrx01-3"/>
</dbReference>
<dbReference type="GlyCosmos" id="P15233">
    <property type="glycosylation" value="6 sites, No reported glycans"/>
</dbReference>
<dbReference type="SABIO-RK" id="P15233"/>
<dbReference type="GO" id="GO:0005576">
    <property type="term" value="C:extracellular region"/>
    <property type="evidence" value="ECO:0007669"/>
    <property type="project" value="UniProtKB-SubCell"/>
</dbReference>
<dbReference type="GO" id="GO:0005773">
    <property type="term" value="C:vacuole"/>
    <property type="evidence" value="ECO:0007669"/>
    <property type="project" value="UniProtKB-SubCell"/>
</dbReference>
<dbReference type="GO" id="GO:0020037">
    <property type="term" value="F:heme binding"/>
    <property type="evidence" value="ECO:0007669"/>
    <property type="project" value="InterPro"/>
</dbReference>
<dbReference type="GO" id="GO:0140825">
    <property type="term" value="F:lactoperoxidase activity"/>
    <property type="evidence" value="ECO:0007669"/>
    <property type="project" value="UniProtKB-EC"/>
</dbReference>
<dbReference type="GO" id="GO:0046872">
    <property type="term" value="F:metal ion binding"/>
    <property type="evidence" value="ECO:0007669"/>
    <property type="project" value="UniProtKB-KW"/>
</dbReference>
<dbReference type="GO" id="GO:0042744">
    <property type="term" value="P:hydrogen peroxide catabolic process"/>
    <property type="evidence" value="ECO:0007669"/>
    <property type="project" value="UniProtKB-KW"/>
</dbReference>
<dbReference type="GO" id="GO:0006979">
    <property type="term" value="P:response to oxidative stress"/>
    <property type="evidence" value="ECO:0007669"/>
    <property type="project" value="InterPro"/>
</dbReference>
<dbReference type="CDD" id="cd00693">
    <property type="entry name" value="secretory_peroxidase"/>
    <property type="match status" value="1"/>
</dbReference>
<dbReference type="FunFam" id="1.10.420.10:FF:000001">
    <property type="entry name" value="Peroxidase"/>
    <property type="match status" value="1"/>
</dbReference>
<dbReference type="FunFam" id="1.10.520.10:FF:000001">
    <property type="entry name" value="Peroxidase"/>
    <property type="match status" value="1"/>
</dbReference>
<dbReference type="Gene3D" id="1.10.520.10">
    <property type="match status" value="1"/>
</dbReference>
<dbReference type="Gene3D" id="1.10.420.10">
    <property type="entry name" value="Peroxidase, domain 2"/>
    <property type="match status" value="1"/>
</dbReference>
<dbReference type="InterPro" id="IPR002016">
    <property type="entry name" value="Haem_peroxidase"/>
</dbReference>
<dbReference type="InterPro" id="IPR010255">
    <property type="entry name" value="Haem_peroxidase_sf"/>
</dbReference>
<dbReference type="InterPro" id="IPR000823">
    <property type="entry name" value="Peroxidase_pln"/>
</dbReference>
<dbReference type="InterPro" id="IPR019794">
    <property type="entry name" value="Peroxidases_AS"/>
</dbReference>
<dbReference type="InterPro" id="IPR019793">
    <property type="entry name" value="Peroxidases_heam-ligand_BS"/>
</dbReference>
<dbReference type="InterPro" id="IPR033905">
    <property type="entry name" value="Secretory_peroxidase"/>
</dbReference>
<dbReference type="PANTHER" id="PTHR31388:SF270">
    <property type="entry name" value="PEROXIDASE 22-RELATED"/>
    <property type="match status" value="1"/>
</dbReference>
<dbReference type="PANTHER" id="PTHR31388">
    <property type="entry name" value="PEROXIDASE 72-RELATED"/>
    <property type="match status" value="1"/>
</dbReference>
<dbReference type="Pfam" id="PF00141">
    <property type="entry name" value="peroxidase"/>
    <property type="match status" value="1"/>
</dbReference>
<dbReference type="PRINTS" id="PR00458">
    <property type="entry name" value="PEROXIDASE"/>
</dbReference>
<dbReference type="PRINTS" id="PR00461">
    <property type="entry name" value="PLPEROXIDASE"/>
</dbReference>
<dbReference type="SUPFAM" id="SSF48113">
    <property type="entry name" value="Heme-dependent peroxidases"/>
    <property type="match status" value="1"/>
</dbReference>
<dbReference type="PROSITE" id="PS00435">
    <property type="entry name" value="PEROXIDASE_1"/>
    <property type="match status" value="1"/>
</dbReference>
<dbReference type="PROSITE" id="PS00436">
    <property type="entry name" value="PEROXIDASE_2"/>
    <property type="match status" value="1"/>
</dbReference>
<dbReference type="PROSITE" id="PS50873">
    <property type="entry name" value="PEROXIDASE_4"/>
    <property type="match status" value="1"/>
</dbReference>